<name>TATB_NEIMB</name>
<keyword id="KW-0997">Cell inner membrane</keyword>
<keyword id="KW-1003">Cell membrane</keyword>
<keyword id="KW-0472">Membrane</keyword>
<keyword id="KW-0653">Protein transport</keyword>
<keyword id="KW-1185">Reference proteome</keyword>
<keyword id="KW-0811">Translocation</keyword>
<keyword id="KW-0812">Transmembrane</keyword>
<keyword id="KW-1133">Transmembrane helix</keyword>
<keyword id="KW-0813">Transport</keyword>
<gene>
    <name evidence="1" type="primary">tatB</name>
    <name type="ordered locus">NMB0600</name>
</gene>
<sequence>MFDFGLGELVFVGIIALIVLGPERLPEAARTAGRLIGRLQRFVGSVKQEFDTQIELEELRKAKQEFEAAAAQVRDSLKETGTDMEGNLHDISDGLKPWEKLPEQRTPADFGVDENGNPLPDAANTLSDGISDVMPSERSYASAETLGDSGQTGSTAEPAETDQDRAWREYLTASAAAPVVQTVEVSYIDTAVETPVPHTTSLRKQAISRKRDFRPKHRAKPKLRVRKS</sequence>
<accession>Q9K0J6</accession>
<dbReference type="EMBL" id="AE002098">
    <property type="protein sequence ID" value="AAF41028.1"/>
    <property type="molecule type" value="Genomic_DNA"/>
</dbReference>
<dbReference type="PIR" id="E81181">
    <property type="entry name" value="E81181"/>
</dbReference>
<dbReference type="RefSeq" id="NP_273644.1">
    <property type="nucleotide sequence ID" value="NC_003112.2"/>
</dbReference>
<dbReference type="RefSeq" id="WP_002222848.1">
    <property type="nucleotide sequence ID" value="NC_003112.2"/>
</dbReference>
<dbReference type="SMR" id="Q9K0J6"/>
<dbReference type="STRING" id="122586.NMB0600"/>
<dbReference type="PaxDb" id="122586-NMB0600"/>
<dbReference type="KEGG" id="nme:NMB0600"/>
<dbReference type="PATRIC" id="fig|122586.8.peg.762"/>
<dbReference type="HOGENOM" id="CLU_086034_1_1_4"/>
<dbReference type="InParanoid" id="Q9K0J6"/>
<dbReference type="OrthoDB" id="9816005at2"/>
<dbReference type="Proteomes" id="UP000000425">
    <property type="component" value="Chromosome"/>
</dbReference>
<dbReference type="GO" id="GO:0033281">
    <property type="term" value="C:TAT protein transport complex"/>
    <property type="evidence" value="ECO:0007669"/>
    <property type="project" value="UniProtKB-UniRule"/>
</dbReference>
<dbReference type="GO" id="GO:0008320">
    <property type="term" value="F:protein transmembrane transporter activity"/>
    <property type="evidence" value="ECO:0007669"/>
    <property type="project" value="UniProtKB-UniRule"/>
</dbReference>
<dbReference type="GO" id="GO:0043953">
    <property type="term" value="P:protein transport by the Tat complex"/>
    <property type="evidence" value="ECO:0007669"/>
    <property type="project" value="UniProtKB-UniRule"/>
</dbReference>
<dbReference type="Gene3D" id="1.20.5.3310">
    <property type="match status" value="1"/>
</dbReference>
<dbReference type="HAMAP" id="MF_00237">
    <property type="entry name" value="TatB"/>
    <property type="match status" value="1"/>
</dbReference>
<dbReference type="InterPro" id="IPR003369">
    <property type="entry name" value="TatA/B/E"/>
</dbReference>
<dbReference type="InterPro" id="IPR018448">
    <property type="entry name" value="TatB"/>
</dbReference>
<dbReference type="NCBIfam" id="TIGR01410">
    <property type="entry name" value="tatB"/>
    <property type="match status" value="1"/>
</dbReference>
<dbReference type="PANTHER" id="PTHR33162">
    <property type="entry name" value="SEC-INDEPENDENT PROTEIN TRANSLOCASE PROTEIN TATA, CHLOROPLASTIC"/>
    <property type="match status" value="1"/>
</dbReference>
<dbReference type="PANTHER" id="PTHR33162:SF1">
    <property type="entry name" value="SEC-INDEPENDENT PROTEIN TRANSLOCASE PROTEIN TATA, CHLOROPLASTIC"/>
    <property type="match status" value="1"/>
</dbReference>
<dbReference type="Pfam" id="PF02416">
    <property type="entry name" value="TatA_B_E"/>
    <property type="match status" value="1"/>
</dbReference>
<dbReference type="PRINTS" id="PR01506">
    <property type="entry name" value="TATBPROTEIN"/>
</dbReference>
<reference key="1">
    <citation type="journal article" date="2000" name="Science">
        <title>Complete genome sequence of Neisseria meningitidis serogroup B strain MC58.</title>
        <authorList>
            <person name="Tettelin H."/>
            <person name="Saunders N.J."/>
            <person name="Heidelberg J.F."/>
            <person name="Jeffries A.C."/>
            <person name="Nelson K.E."/>
            <person name="Eisen J.A."/>
            <person name="Ketchum K.A."/>
            <person name="Hood D.W."/>
            <person name="Peden J.F."/>
            <person name="Dodson R.J."/>
            <person name="Nelson W.C."/>
            <person name="Gwinn M.L."/>
            <person name="DeBoy R.T."/>
            <person name="Peterson J.D."/>
            <person name="Hickey E.K."/>
            <person name="Haft D.H."/>
            <person name="Salzberg S.L."/>
            <person name="White O."/>
            <person name="Fleischmann R.D."/>
            <person name="Dougherty B.A."/>
            <person name="Mason T.M."/>
            <person name="Ciecko A."/>
            <person name="Parksey D.S."/>
            <person name="Blair E."/>
            <person name="Cittone H."/>
            <person name="Clark E.B."/>
            <person name="Cotton M.D."/>
            <person name="Utterback T.R."/>
            <person name="Khouri H.M."/>
            <person name="Qin H."/>
            <person name="Vamathevan J.J."/>
            <person name="Gill J."/>
            <person name="Scarlato V."/>
            <person name="Masignani V."/>
            <person name="Pizza M."/>
            <person name="Grandi G."/>
            <person name="Sun L."/>
            <person name="Smith H.O."/>
            <person name="Fraser C.M."/>
            <person name="Moxon E.R."/>
            <person name="Rappuoli R."/>
            <person name="Venter J.C."/>
        </authorList>
    </citation>
    <scope>NUCLEOTIDE SEQUENCE [LARGE SCALE GENOMIC DNA]</scope>
    <source>
        <strain>ATCC BAA-335 / MC58</strain>
    </source>
</reference>
<feature type="chain" id="PRO_0000192663" description="Sec-independent protein translocase protein TatB">
    <location>
        <begin position="1"/>
        <end position="228"/>
    </location>
</feature>
<feature type="transmembrane region" description="Helical" evidence="1">
    <location>
        <begin position="1"/>
        <end position="21"/>
    </location>
</feature>
<feature type="region of interest" description="Disordered" evidence="2">
    <location>
        <begin position="109"/>
        <end position="162"/>
    </location>
</feature>
<feature type="region of interest" description="Disordered" evidence="2">
    <location>
        <begin position="197"/>
        <end position="228"/>
    </location>
</feature>
<feature type="compositionally biased region" description="Basic residues" evidence="2">
    <location>
        <begin position="206"/>
        <end position="228"/>
    </location>
</feature>
<evidence type="ECO:0000255" key="1">
    <source>
        <dbReference type="HAMAP-Rule" id="MF_00237"/>
    </source>
</evidence>
<evidence type="ECO:0000256" key="2">
    <source>
        <dbReference type="SAM" id="MobiDB-lite"/>
    </source>
</evidence>
<protein>
    <recommendedName>
        <fullName evidence="1">Sec-independent protein translocase protein TatB</fullName>
    </recommendedName>
</protein>
<comment type="function">
    <text evidence="1">Part of the twin-arginine translocation (Tat) system that transports large folded proteins containing a characteristic twin-arginine motif in their signal peptide across membranes. Together with TatC, TatB is part of a receptor directly interacting with Tat signal peptides. TatB may form an oligomeric binding site that transiently accommodates folded Tat precursor proteins before their translocation.</text>
</comment>
<comment type="subunit">
    <text evidence="1">The Tat system comprises two distinct complexes: a TatABC complex, containing multiple copies of TatA, TatB and TatC subunits, and a separate TatA complex, containing only TatA subunits. Substrates initially bind to the TatABC complex, which probably triggers association of the separate TatA complex to form the active translocon.</text>
</comment>
<comment type="subcellular location">
    <subcellularLocation>
        <location evidence="1">Cell inner membrane</location>
        <topology evidence="1">Single-pass membrane protein</topology>
    </subcellularLocation>
</comment>
<comment type="similarity">
    <text evidence="1">Belongs to the TatB family.</text>
</comment>
<organism>
    <name type="scientific">Neisseria meningitidis serogroup B (strain ATCC BAA-335 / MC58)</name>
    <dbReference type="NCBI Taxonomy" id="122586"/>
    <lineage>
        <taxon>Bacteria</taxon>
        <taxon>Pseudomonadati</taxon>
        <taxon>Pseudomonadota</taxon>
        <taxon>Betaproteobacteria</taxon>
        <taxon>Neisseriales</taxon>
        <taxon>Neisseriaceae</taxon>
        <taxon>Neisseria</taxon>
    </lineage>
</organism>
<proteinExistence type="inferred from homology"/>